<gene>
    <name type="primary">Spink13</name>
</gene>
<evidence type="ECO:0000250" key="1"/>
<evidence type="ECO:0000255" key="2"/>
<evidence type="ECO:0000255" key="3">
    <source>
        <dbReference type="PROSITE-ProRule" id="PRU00798"/>
    </source>
</evidence>
<evidence type="ECO:0000269" key="4">
    <source>
    </source>
</evidence>
<name>ISK13_RAT</name>
<keyword id="KW-1015">Disulfide bond</keyword>
<keyword id="KW-0646">Protease inhibitor</keyword>
<keyword id="KW-1185">Reference proteome</keyword>
<keyword id="KW-0964">Secreted</keyword>
<keyword id="KW-0722">Serine protease inhibitor</keyword>
<keyword id="KW-0732">Signal</keyword>
<feature type="signal peptide" evidence="2">
    <location>
        <begin position="1"/>
        <end position="26"/>
    </location>
</feature>
<feature type="chain" id="PRO_0000423009" description="Serine protease inhibitor Kazal-type 13">
    <location>
        <begin position="27"/>
        <end position="97"/>
    </location>
</feature>
<feature type="domain" description="Kazal-like" evidence="3">
    <location>
        <begin position="36"/>
        <end position="97"/>
    </location>
</feature>
<feature type="site" description="Reactive bond" evidence="3">
    <location>
        <begin position="58"/>
        <end position="59"/>
    </location>
</feature>
<feature type="disulfide bond" evidence="3">
    <location>
        <begin position="42"/>
        <end position="78"/>
    </location>
</feature>
<feature type="disulfide bond" evidence="3">
    <location>
        <begin position="56"/>
        <end position="75"/>
    </location>
</feature>
<feature type="disulfide bond" evidence="3">
    <location>
        <begin position="64"/>
        <end position="96"/>
    </location>
</feature>
<proteinExistence type="evidence at protein level"/>
<reference key="1">
    <citation type="journal article" date="2004" name="Nature">
        <title>Genome sequence of the Brown Norway rat yields insights into mammalian evolution.</title>
        <authorList>
            <person name="Gibbs R.A."/>
            <person name="Weinstock G.M."/>
            <person name="Metzker M.L."/>
            <person name="Muzny D.M."/>
            <person name="Sodergren E.J."/>
            <person name="Scherer S."/>
            <person name="Scott G."/>
            <person name="Steffen D."/>
            <person name="Worley K.C."/>
            <person name="Burch P.E."/>
            <person name="Okwuonu G."/>
            <person name="Hines S."/>
            <person name="Lewis L."/>
            <person name="Deramo C."/>
            <person name="Delgado O."/>
            <person name="Dugan-Rocha S."/>
            <person name="Miner G."/>
            <person name="Morgan M."/>
            <person name="Hawes A."/>
            <person name="Gill R."/>
            <person name="Holt R.A."/>
            <person name="Adams M.D."/>
            <person name="Amanatides P.G."/>
            <person name="Baden-Tillson H."/>
            <person name="Barnstead M."/>
            <person name="Chin S."/>
            <person name="Evans C.A."/>
            <person name="Ferriera S."/>
            <person name="Fosler C."/>
            <person name="Glodek A."/>
            <person name="Gu Z."/>
            <person name="Jennings D."/>
            <person name="Kraft C.L."/>
            <person name="Nguyen T."/>
            <person name="Pfannkoch C.M."/>
            <person name="Sitter C."/>
            <person name="Sutton G.G."/>
            <person name="Venter J.C."/>
            <person name="Woodage T."/>
            <person name="Smith D."/>
            <person name="Lee H.-M."/>
            <person name="Gustafson E."/>
            <person name="Cahill P."/>
            <person name="Kana A."/>
            <person name="Doucette-Stamm L."/>
            <person name="Weinstock K."/>
            <person name="Fechtel K."/>
            <person name="Weiss R.B."/>
            <person name="Dunn D.M."/>
            <person name="Green E.D."/>
            <person name="Blakesley R.W."/>
            <person name="Bouffard G.G."/>
            <person name="De Jong P.J."/>
            <person name="Osoegawa K."/>
            <person name="Zhu B."/>
            <person name="Marra M."/>
            <person name="Schein J."/>
            <person name="Bosdet I."/>
            <person name="Fjell C."/>
            <person name="Jones S."/>
            <person name="Krzywinski M."/>
            <person name="Mathewson C."/>
            <person name="Siddiqui A."/>
            <person name="Wye N."/>
            <person name="McPherson J."/>
            <person name="Zhao S."/>
            <person name="Fraser C.M."/>
            <person name="Shetty J."/>
            <person name="Shatsman S."/>
            <person name="Geer K."/>
            <person name="Chen Y."/>
            <person name="Abramzon S."/>
            <person name="Nierman W.C."/>
            <person name="Havlak P.H."/>
            <person name="Chen R."/>
            <person name="Durbin K.J."/>
            <person name="Egan A."/>
            <person name="Ren Y."/>
            <person name="Song X.-Z."/>
            <person name="Li B."/>
            <person name="Liu Y."/>
            <person name="Qin X."/>
            <person name="Cawley S."/>
            <person name="Cooney A.J."/>
            <person name="D'Souza L.M."/>
            <person name="Martin K."/>
            <person name="Wu J.Q."/>
            <person name="Gonzalez-Garay M.L."/>
            <person name="Jackson A.R."/>
            <person name="Kalafus K.J."/>
            <person name="McLeod M.P."/>
            <person name="Milosavljevic A."/>
            <person name="Virk D."/>
            <person name="Volkov A."/>
            <person name="Wheeler D.A."/>
            <person name="Zhang Z."/>
            <person name="Bailey J.A."/>
            <person name="Eichler E.E."/>
            <person name="Tuzun E."/>
            <person name="Birney E."/>
            <person name="Mongin E."/>
            <person name="Ureta-Vidal A."/>
            <person name="Woodwark C."/>
            <person name="Zdobnov E."/>
            <person name="Bork P."/>
            <person name="Suyama M."/>
            <person name="Torrents D."/>
            <person name="Alexandersson M."/>
            <person name="Trask B.J."/>
            <person name="Young J.M."/>
            <person name="Huang H."/>
            <person name="Wang H."/>
            <person name="Xing H."/>
            <person name="Daniels S."/>
            <person name="Gietzen D."/>
            <person name="Schmidt J."/>
            <person name="Stevens K."/>
            <person name="Vitt U."/>
            <person name="Wingrove J."/>
            <person name="Camara F."/>
            <person name="Mar Alba M."/>
            <person name="Abril J.F."/>
            <person name="Guigo R."/>
            <person name="Smit A."/>
            <person name="Dubchak I."/>
            <person name="Rubin E.M."/>
            <person name="Couronne O."/>
            <person name="Poliakov A."/>
            <person name="Huebner N."/>
            <person name="Ganten D."/>
            <person name="Goesele C."/>
            <person name="Hummel O."/>
            <person name="Kreitler T."/>
            <person name="Lee Y.-A."/>
            <person name="Monti J."/>
            <person name="Schulz H."/>
            <person name="Zimdahl H."/>
            <person name="Himmelbauer H."/>
            <person name="Lehrach H."/>
            <person name="Jacob H.J."/>
            <person name="Bromberg S."/>
            <person name="Gullings-Handley J."/>
            <person name="Jensen-Seaman M.I."/>
            <person name="Kwitek A.E."/>
            <person name="Lazar J."/>
            <person name="Pasko D."/>
            <person name="Tonellato P.J."/>
            <person name="Twigger S."/>
            <person name="Ponting C.P."/>
            <person name="Duarte J.M."/>
            <person name="Rice S."/>
            <person name="Goodstadt L."/>
            <person name="Beatson S.A."/>
            <person name="Emes R.D."/>
            <person name="Winter E.E."/>
            <person name="Webber C."/>
            <person name="Brandt P."/>
            <person name="Nyakatura G."/>
            <person name="Adetobi M."/>
            <person name="Chiaromonte F."/>
            <person name="Elnitski L."/>
            <person name="Eswara P."/>
            <person name="Hardison R.C."/>
            <person name="Hou M."/>
            <person name="Kolbe D."/>
            <person name="Makova K."/>
            <person name="Miller W."/>
            <person name="Nekrutenko A."/>
            <person name="Riemer C."/>
            <person name="Schwartz S."/>
            <person name="Taylor J."/>
            <person name="Yang S."/>
            <person name="Zhang Y."/>
            <person name="Lindpaintner K."/>
            <person name="Andrews T.D."/>
            <person name="Caccamo M."/>
            <person name="Clamp M."/>
            <person name="Clarke L."/>
            <person name="Curwen V."/>
            <person name="Durbin R.M."/>
            <person name="Eyras E."/>
            <person name="Searle S.M."/>
            <person name="Cooper G.M."/>
            <person name="Batzoglou S."/>
            <person name="Brudno M."/>
            <person name="Sidow A."/>
            <person name="Stone E.A."/>
            <person name="Payseur B.A."/>
            <person name="Bourque G."/>
            <person name="Lopez-Otin C."/>
            <person name="Puente X.S."/>
            <person name="Chakrabarti K."/>
            <person name="Chatterji S."/>
            <person name="Dewey C."/>
            <person name="Pachter L."/>
            <person name="Bray N."/>
            <person name="Yap V.B."/>
            <person name="Caspi A."/>
            <person name="Tesler G."/>
            <person name="Pevzner P.A."/>
            <person name="Haussler D."/>
            <person name="Roskin K.M."/>
            <person name="Baertsch R."/>
            <person name="Clawson H."/>
            <person name="Furey T.S."/>
            <person name="Hinrichs A.S."/>
            <person name="Karolchik D."/>
            <person name="Kent W.J."/>
            <person name="Rosenbloom K.R."/>
            <person name="Trumbower H."/>
            <person name="Weirauch M."/>
            <person name="Cooper D.N."/>
            <person name="Stenson P.D."/>
            <person name="Ma B."/>
            <person name="Brent M."/>
            <person name="Arumugam M."/>
            <person name="Shteynberg D."/>
            <person name="Copley R.R."/>
            <person name="Taylor M.S."/>
            <person name="Riethman H."/>
            <person name="Mudunuri U."/>
            <person name="Peterson J."/>
            <person name="Guyer M."/>
            <person name="Felsenfeld A."/>
            <person name="Old S."/>
            <person name="Mockrin S."/>
            <person name="Collins F.S."/>
        </authorList>
    </citation>
    <scope>NUCLEOTIDE SEQUENCE [LARGE SCALE GENOMIC DNA]</scope>
    <source>
        <strain>Brown Norway</strain>
    </source>
</reference>
<reference key="2">
    <citation type="submission" date="2005-07" db="EMBL/GenBank/DDBJ databases">
        <authorList>
            <person name="Mural R.J."/>
            <person name="Adams M.D."/>
            <person name="Myers E.W."/>
            <person name="Smith H.O."/>
            <person name="Venter J.C."/>
        </authorList>
    </citation>
    <scope>NUCLEOTIDE SEQUENCE [LARGE SCALE GENOMIC DNA]</scope>
</reference>
<reference key="3">
    <citation type="journal article" date="2013" name="J. Biol. Chem.">
        <title>Spink13, an epididymis-specific gene of the Kazal-type serine protease inhibitor (SPINK) family, is essential for the acrosomal integrity and male fertility.</title>
        <authorList>
            <person name="Ma L."/>
            <person name="Yu H."/>
            <person name="Ni Z."/>
            <person name="Hu S."/>
            <person name="Ma W."/>
            <person name="Chu C."/>
            <person name="Liu Q."/>
            <person name="Zhang Y."/>
        </authorList>
    </citation>
    <scope>FUNCTION</scope>
    <scope>SUBCELLULAR LOCATION</scope>
    <scope>TISSUE SPECIFICITY</scope>
    <scope>DEVELOPMENTAL STAGE</scope>
    <scope>INDUCTION</scope>
</reference>
<dbReference type="EMBL" id="AABR06095461">
    <property type="status" value="NOT_ANNOTATED_CDS"/>
    <property type="molecule type" value="Genomic_DNA"/>
</dbReference>
<dbReference type="EMBL" id="AABR06095462">
    <property type="status" value="NOT_ANNOTATED_CDS"/>
    <property type="molecule type" value="Genomic_DNA"/>
</dbReference>
<dbReference type="EMBL" id="AABR06095463">
    <property type="status" value="NOT_ANNOTATED_CDS"/>
    <property type="molecule type" value="Genomic_DNA"/>
</dbReference>
<dbReference type="EMBL" id="AABR06095464">
    <property type="status" value="NOT_ANNOTATED_CDS"/>
    <property type="molecule type" value="Genomic_DNA"/>
</dbReference>
<dbReference type="EMBL" id="CH473971">
    <property type="protein sequence ID" value="EDM14640.1"/>
    <property type="molecule type" value="Genomic_DNA"/>
</dbReference>
<dbReference type="RefSeq" id="NP_001103009.1">
    <property type="nucleotide sequence ID" value="NM_001109539.1"/>
</dbReference>
<dbReference type="RefSeq" id="XP_008770397.1">
    <property type="nucleotide sequence ID" value="XM_008772175.2"/>
</dbReference>
<dbReference type="SMR" id="D3ZVP0"/>
<dbReference type="FunCoup" id="D3ZVP0">
    <property type="interactions" value="2"/>
</dbReference>
<dbReference type="STRING" id="10116.ENSRNOP00000056043"/>
<dbReference type="PhosphoSitePlus" id="D3ZVP0"/>
<dbReference type="PaxDb" id="10116-ENSRNOP00000056043"/>
<dbReference type="Ensembl" id="ENSRNOT00000059276.4">
    <property type="protein sequence ID" value="ENSRNOP00000056043.2"/>
    <property type="gene ID" value="ENSRNOG00000038793.4"/>
</dbReference>
<dbReference type="GeneID" id="689570"/>
<dbReference type="KEGG" id="rno:689570"/>
<dbReference type="UCSC" id="RGD:1591057">
    <property type="organism name" value="rat"/>
</dbReference>
<dbReference type="AGR" id="RGD:1591057"/>
<dbReference type="CTD" id="153218"/>
<dbReference type="RGD" id="1591057">
    <property type="gene designation" value="Spink13"/>
</dbReference>
<dbReference type="eggNOG" id="KOG3649">
    <property type="taxonomic scope" value="Eukaryota"/>
</dbReference>
<dbReference type="GeneTree" id="ENSGT00400000023784"/>
<dbReference type="HOGENOM" id="CLU_161738_0_0_1"/>
<dbReference type="InParanoid" id="D3ZVP0"/>
<dbReference type="OMA" id="FFCVEQW"/>
<dbReference type="OrthoDB" id="126772at2759"/>
<dbReference type="PhylomeDB" id="D3ZVP0"/>
<dbReference type="PRO" id="PR:D3ZVP0"/>
<dbReference type="Proteomes" id="UP000002494">
    <property type="component" value="Chromosome 18"/>
</dbReference>
<dbReference type="Proteomes" id="UP000234681">
    <property type="component" value="Chromosome 18"/>
</dbReference>
<dbReference type="GO" id="GO:0005576">
    <property type="term" value="C:extracellular region"/>
    <property type="evidence" value="ECO:0007669"/>
    <property type="project" value="UniProtKB-SubCell"/>
</dbReference>
<dbReference type="GO" id="GO:0004867">
    <property type="term" value="F:serine-type endopeptidase inhibitor activity"/>
    <property type="evidence" value="ECO:0007669"/>
    <property type="project" value="UniProtKB-KW"/>
</dbReference>
<dbReference type="GO" id="GO:1902225">
    <property type="term" value="P:negative regulation of acrosome reaction"/>
    <property type="evidence" value="ECO:0000315"/>
    <property type="project" value="UniProtKB"/>
</dbReference>
<dbReference type="CDD" id="cd00104">
    <property type="entry name" value="KAZAL_FS"/>
    <property type="match status" value="1"/>
</dbReference>
<dbReference type="Gene3D" id="3.30.60.30">
    <property type="match status" value="1"/>
</dbReference>
<dbReference type="InterPro" id="IPR002350">
    <property type="entry name" value="Kazal_dom"/>
</dbReference>
<dbReference type="InterPro" id="IPR036058">
    <property type="entry name" value="Kazal_dom_sf"/>
</dbReference>
<dbReference type="PANTHER" id="PTHR21312">
    <property type="entry name" value="SERINE PROTEASE INHIBITOR"/>
    <property type="match status" value="1"/>
</dbReference>
<dbReference type="PANTHER" id="PTHR21312:SF36">
    <property type="entry name" value="SERINE PROTEASE INHIBITOR KAZAL-TYPE 13"/>
    <property type="match status" value="1"/>
</dbReference>
<dbReference type="Pfam" id="PF00050">
    <property type="entry name" value="Kazal_1"/>
    <property type="match status" value="1"/>
</dbReference>
<dbReference type="SMART" id="SM00280">
    <property type="entry name" value="KAZAL"/>
    <property type="match status" value="1"/>
</dbReference>
<dbReference type="SUPFAM" id="SSF100895">
    <property type="entry name" value="Kazal-type serine protease inhibitors"/>
    <property type="match status" value="1"/>
</dbReference>
<dbReference type="PROSITE" id="PS00282">
    <property type="entry name" value="KAZAL_1"/>
    <property type="match status" value="1"/>
</dbReference>
<dbReference type="PROSITE" id="PS51465">
    <property type="entry name" value="KAZAL_2"/>
    <property type="match status" value="1"/>
</dbReference>
<sequence length="97" mass="11415">MTRRGCWPHRIIFSLILLTWTHVTLAALIRSHTFSNWPKPPCKMYYPIDPDYEANCPDVIALVCATNGLNYKNECFFCIDRWEFGPHIEFVKYGKCE</sequence>
<comment type="function">
    <text evidence="1 4">May be a serine protease inhibitor (By similarity). Essential for sperm maturation and fertility. Inhibits sperm acrosome reaction, protecting sperm from premature reaction.</text>
</comment>
<comment type="subcellular location">
    <subcellularLocation>
        <location evidence="4">Secreted</location>
    </subcellularLocation>
    <text>Secreted into the lumen of the initial segment of the epididymis and binds to sperm. In the initial segment of epididymis, localizes on the dorsal surface of the acrosomal region of sperm, gradually becomes more restricted to the acrosomal region in spermatozoa during epididymal transit.</text>
</comment>
<comment type="tissue specificity">
    <text evidence="4">Restricted to the epididymis, with highest levels in the initial segment, including epithelial cells, lumen, and sperm (at protein level). Localizes to the sperm heads, where it is restricted to the acrosomal region in epididymal spermatozoa, but not in testicular spermatozoa (at protein level).</text>
</comment>
<comment type="developmental stage">
    <text evidence="4">First expressed at low levels at P15 in the epididymis. Expression increases from P30 onward. Reaches its highest level at P120 and remains at a stable level in mature animals.</text>
</comment>
<comment type="induction">
    <text evidence="4">Up-regulated by testosterone.</text>
</comment>
<protein>
    <recommendedName>
        <fullName>Serine protease inhibitor Kazal-type 13</fullName>
    </recommendedName>
</protein>
<organism>
    <name type="scientific">Rattus norvegicus</name>
    <name type="common">Rat</name>
    <dbReference type="NCBI Taxonomy" id="10116"/>
    <lineage>
        <taxon>Eukaryota</taxon>
        <taxon>Metazoa</taxon>
        <taxon>Chordata</taxon>
        <taxon>Craniata</taxon>
        <taxon>Vertebrata</taxon>
        <taxon>Euteleostomi</taxon>
        <taxon>Mammalia</taxon>
        <taxon>Eutheria</taxon>
        <taxon>Euarchontoglires</taxon>
        <taxon>Glires</taxon>
        <taxon>Rodentia</taxon>
        <taxon>Myomorpha</taxon>
        <taxon>Muroidea</taxon>
        <taxon>Muridae</taxon>
        <taxon>Murinae</taxon>
        <taxon>Rattus</taxon>
    </lineage>
</organism>
<accession>D3ZVP0</accession>